<evidence type="ECO:0000255" key="1">
    <source>
        <dbReference type="HAMAP-Rule" id="MF_00147"/>
    </source>
</evidence>
<feature type="chain" id="PRO_1000118003" description="Triosephosphate isomerase">
    <location>
        <begin position="1"/>
        <end position="255"/>
    </location>
</feature>
<feature type="active site" description="Electrophile" evidence="1">
    <location>
        <position position="95"/>
    </location>
</feature>
<feature type="active site" description="Proton acceptor" evidence="1">
    <location>
        <position position="167"/>
    </location>
</feature>
<feature type="binding site" evidence="1">
    <location>
        <begin position="9"/>
        <end position="11"/>
    </location>
    <ligand>
        <name>substrate</name>
    </ligand>
</feature>
<feature type="binding site" evidence="1">
    <location>
        <position position="173"/>
    </location>
    <ligand>
        <name>substrate</name>
    </ligand>
</feature>
<feature type="binding site" evidence="1">
    <location>
        <position position="212"/>
    </location>
    <ligand>
        <name>substrate</name>
    </ligand>
</feature>
<feature type="binding site" evidence="1">
    <location>
        <begin position="233"/>
        <end position="234"/>
    </location>
    <ligand>
        <name>substrate</name>
    </ligand>
</feature>
<organism>
    <name type="scientific">Escherichia coli O45:K1 (strain S88 / ExPEC)</name>
    <dbReference type="NCBI Taxonomy" id="585035"/>
    <lineage>
        <taxon>Bacteria</taxon>
        <taxon>Pseudomonadati</taxon>
        <taxon>Pseudomonadota</taxon>
        <taxon>Gammaproteobacteria</taxon>
        <taxon>Enterobacterales</taxon>
        <taxon>Enterobacteriaceae</taxon>
        <taxon>Escherichia</taxon>
    </lineage>
</organism>
<keyword id="KW-0963">Cytoplasm</keyword>
<keyword id="KW-0312">Gluconeogenesis</keyword>
<keyword id="KW-0324">Glycolysis</keyword>
<keyword id="KW-0413">Isomerase</keyword>
<keyword id="KW-1185">Reference proteome</keyword>
<sequence length="255" mass="26972">MRHPLVMGNWKLNGSRHMVHELVSNLRKELAGVAGCAVAIAPPEMYIDMAKREAEGSHIMLGAQNVDLNLSGAFTGETSAAMLKDIGAQYIIIGHSERRTYHKESDELIAKKFAVLKEQGLTPVLCIGETEAENEAGKTEEVCARQIDAVLKTQGAAAFEGAVIAYEPVWAIGTGKSATPAQAQAVHKFIRDHIAKVDANIAEQVIIQYGGSVNASNAAELFAQPDIDGALVGGASLKADAFAVIVKAAEAAKQA</sequence>
<reference key="1">
    <citation type="journal article" date="2009" name="PLoS Genet.">
        <title>Organised genome dynamics in the Escherichia coli species results in highly diverse adaptive paths.</title>
        <authorList>
            <person name="Touchon M."/>
            <person name="Hoede C."/>
            <person name="Tenaillon O."/>
            <person name="Barbe V."/>
            <person name="Baeriswyl S."/>
            <person name="Bidet P."/>
            <person name="Bingen E."/>
            <person name="Bonacorsi S."/>
            <person name="Bouchier C."/>
            <person name="Bouvet O."/>
            <person name="Calteau A."/>
            <person name="Chiapello H."/>
            <person name="Clermont O."/>
            <person name="Cruveiller S."/>
            <person name="Danchin A."/>
            <person name="Diard M."/>
            <person name="Dossat C."/>
            <person name="Karoui M.E."/>
            <person name="Frapy E."/>
            <person name="Garry L."/>
            <person name="Ghigo J.M."/>
            <person name="Gilles A.M."/>
            <person name="Johnson J."/>
            <person name="Le Bouguenec C."/>
            <person name="Lescat M."/>
            <person name="Mangenot S."/>
            <person name="Martinez-Jehanne V."/>
            <person name="Matic I."/>
            <person name="Nassif X."/>
            <person name="Oztas S."/>
            <person name="Petit M.A."/>
            <person name="Pichon C."/>
            <person name="Rouy Z."/>
            <person name="Ruf C.S."/>
            <person name="Schneider D."/>
            <person name="Tourret J."/>
            <person name="Vacherie B."/>
            <person name="Vallenet D."/>
            <person name="Medigue C."/>
            <person name="Rocha E.P.C."/>
            <person name="Denamur E."/>
        </authorList>
    </citation>
    <scope>NUCLEOTIDE SEQUENCE [LARGE SCALE GENOMIC DNA]</scope>
    <source>
        <strain>S88 / ExPEC</strain>
    </source>
</reference>
<gene>
    <name evidence="1" type="primary">tpiA</name>
    <name type="ordered locus">ECS88_4369</name>
</gene>
<dbReference type="EC" id="5.3.1.1" evidence="1"/>
<dbReference type="EMBL" id="CU928161">
    <property type="protein sequence ID" value="CAR05549.1"/>
    <property type="molecule type" value="Genomic_DNA"/>
</dbReference>
<dbReference type="RefSeq" id="WP_001216325.1">
    <property type="nucleotide sequence ID" value="NC_011742.1"/>
</dbReference>
<dbReference type="SMR" id="B7MI51"/>
<dbReference type="GeneID" id="93777979"/>
<dbReference type="KEGG" id="ecz:ECS88_4369"/>
<dbReference type="HOGENOM" id="CLU_024251_2_1_6"/>
<dbReference type="UniPathway" id="UPA00109">
    <property type="reaction ID" value="UER00189"/>
</dbReference>
<dbReference type="UniPathway" id="UPA00138"/>
<dbReference type="Proteomes" id="UP000000747">
    <property type="component" value="Chromosome"/>
</dbReference>
<dbReference type="GO" id="GO:0005829">
    <property type="term" value="C:cytosol"/>
    <property type="evidence" value="ECO:0007669"/>
    <property type="project" value="TreeGrafter"/>
</dbReference>
<dbReference type="GO" id="GO:0004807">
    <property type="term" value="F:triose-phosphate isomerase activity"/>
    <property type="evidence" value="ECO:0007669"/>
    <property type="project" value="UniProtKB-UniRule"/>
</dbReference>
<dbReference type="GO" id="GO:0006094">
    <property type="term" value="P:gluconeogenesis"/>
    <property type="evidence" value="ECO:0007669"/>
    <property type="project" value="UniProtKB-UniRule"/>
</dbReference>
<dbReference type="GO" id="GO:0046166">
    <property type="term" value="P:glyceraldehyde-3-phosphate biosynthetic process"/>
    <property type="evidence" value="ECO:0007669"/>
    <property type="project" value="TreeGrafter"/>
</dbReference>
<dbReference type="GO" id="GO:0019563">
    <property type="term" value="P:glycerol catabolic process"/>
    <property type="evidence" value="ECO:0007669"/>
    <property type="project" value="TreeGrafter"/>
</dbReference>
<dbReference type="GO" id="GO:0006096">
    <property type="term" value="P:glycolytic process"/>
    <property type="evidence" value="ECO:0007669"/>
    <property type="project" value="UniProtKB-UniRule"/>
</dbReference>
<dbReference type="CDD" id="cd00311">
    <property type="entry name" value="TIM"/>
    <property type="match status" value="1"/>
</dbReference>
<dbReference type="FunFam" id="3.20.20.70:FF:000020">
    <property type="entry name" value="Triosephosphate isomerase"/>
    <property type="match status" value="1"/>
</dbReference>
<dbReference type="Gene3D" id="3.20.20.70">
    <property type="entry name" value="Aldolase class I"/>
    <property type="match status" value="1"/>
</dbReference>
<dbReference type="HAMAP" id="MF_00147_B">
    <property type="entry name" value="TIM_B"/>
    <property type="match status" value="1"/>
</dbReference>
<dbReference type="InterPro" id="IPR013785">
    <property type="entry name" value="Aldolase_TIM"/>
</dbReference>
<dbReference type="InterPro" id="IPR035990">
    <property type="entry name" value="TIM_sf"/>
</dbReference>
<dbReference type="InterPro" id="IPR022896">
    <property type="entry name" value="TrioseP_Isoase_bac/euk"/>
</dbReference>
<dbReference type="InterPro" id="IPR000652">
    <property type="entry name" value="Triosephosphate_isomerase"/>
</dbReference>
<dbReference type="InterPro" id="IPR020861">
    <property type="entry name" value="Triosephosphate_isomerase_AS"/>
</dbReference>
<dbReference type="NCBIfam" id="TIGR00419">
    <property type="entry name" value="tim"/>
    <property type="match status" value="1"/>
</dbReference>
<dbReference type="PANTHER" id="PTHR21139">
    <property type="entry name" value="TRIOSEPHOSPHATE ISOMERASE"/>
    <property type="match status" value="1"/>
</dbReference>
<dbReference type="PANTHER" id="PTHR21139:SF42">
    <property type="entry name" value="TRIOSEPHOSPHATE ISOMERASE"/>
    <property type="match status" value="1"/>
</dbReference>
<dbReference type="Pfam" id="PF00121">
    <property type="entry name" value="TIM"/>
    <property type="match status" value="1"/>
</dbReference>
<dbReference type="SUPFAM" id="SSF51351">
    <property type="entry name" value="Triosephosphate isomerase (TIM)"/>
    <property type="match status" value="1"/>
</dbReference>
<dbReference type="PROSITE" id="PS00171">
    <property type="entry name" value="TIM_1"/>
    <property type="match status" value="1"/>
</dbReference>
<dbReference type="PROSITE" id="PS51440">
    <property type="entry name" value="TIM_2"/>
    <property type="match status" value="1"/>
</dbReference>
<protein>
    <recommendedName>
        <fullName evidence="1">Triosephosphate isomerase</fullName>
        <shortName evidence="1">TIM</shortName>
        <shortName evidence="1">TPI</shortName>
        <ecNumber evidence="1">5.3.1.1</ecNumber>
    </recommendedName>
    <alternativeName>
        <fullName evidence="1">Triose-phosphate isomerase</fullName>
    </alternativeName>
</protein>
<proteinExistence type="inferred from homology"/>
<accession>B7MI51</accession>
<comment type="function">
    <text evidence="1">Involved in the gluconeogenesis. Catalyzes stereospecifically the conversion of dihydroxyacetone phosphate (DHAP) to D-glyceraldehyde-3-phosphate (G3P).</text>
</comment>
<comment type="catalytic activity">
    <reaction evidence="1">
        <text>D-glyceraldehyde 3-phosphate = dihydroxyacetone phosphate</text>
        <dbReference type="Rhea" id="RHEA:18585"/>
        <dbReference type="ChEBI" id="CHEBI:57642"/>
        <dbReference type="ChEBI" id="CHEBI:59776"/>
        <dbReference type="EC" id="5.3.1.1"/>
    </reaction>
</comment>
<comment type="pathway">
    <text evidence="1">Carbohydrate biosynthesis; gluconeogenesis.</text>
</comment>
<comment type="pathway">
    <text evidence="1">Carbohydrate degradation; glycolysis; D-glyceraldehyde 3-phosphate from glycerone phosphate: step 1/1.</text>
</comment>
<comment type="subunit">
    <text evidence="1">Homodimer.</text>
</comment>
<comment type="subcellular location">
    <subcellularLocation>
        <location evidence="1">Cytoplasm</location>
    </subcellularLocation>
</comment>
<comment type="similarity">
    <text evidence="1">Belongs to the triosephosphate isomerase family.</text>
</comment>
<name>TPIS_ECO45</name>